<protein>
    <recommendedName>
        <fullName evidence="1">3,4-dihydroxy-2-butanone 4-phosphate synthase</fullName>
        <shortName evidence="1">DHBP synthase</shortName>
        <ecNumber evidence="1">4.1.99.12</ecNumber>
    </recommendedName>
</protein>
<proteinExistence type="inferred from homology"/>
<reference key="1">
    <citation type="journal article" date="2008" name="J. Bacteriol.">
        <title>Complete genome sequence of uropathogenic Proteus mirabilis, a master of both adherence and motility.</title>
        <authorList>
            <person name="Pearson M.M."/>
            <person name="Sebaihia M."/>
            <person name="Churcher C."/>
            <person name="Quail M.A."/>
            <person name="Seshasayee A.S."/>
            <person name="Luscombe N.M."/>
            <person name="Abdellah Z."/>
            <person name="Arrosmith C."/>
            <person name="Atkin B."/>
            <person name="Chillingworth T."/>
            <person name="Hauser H."/>
            <person name="Jagels K."/>
            <person name="Moule S."/>
            <person name="Mungall K."/>
            <person name="Norbertczak H."/>
            <person name="Rabbinowitsch E."/>
            <person name="Walker D."/>
            <person name="Whithead S."/>
            <person name="Thomson N.R."/>
            <person name="Rather P.N."/>
            <person name="Parkhill J."/>
            <person name="Mobley H.L.T."/>
        </authorList>
    </citation>
    <scope>NUCLEOTIDE SEQUENCE [LARGE SCALE GENOMIC DNA]</scope>
    <source>
        <strain>HI4320</strain>
    </source>
</reference>
<feature type="chain" id="PRO_1000098282" description="3,4-dihydroxy-2-butanone 4-phosphate synthase">
    <location>
        <begin position="1"/>
        <end position="217"/>
    </location>
</feature>
<feature type="binding site" evidence="1">
    <location>
        <begin position="37"/>
        <end position="38"/>
    </location>
    <ligand>
        <name>D-ribulose 5-phosphate</name>
        <dbReference type="ChEBI" id="CHEBI:58121"/>
    </ligand>
</feature>
<feature type="binding site" evidence="1">
    <location>
        <position position="38"/>
    </location>
    <ligand>
        <name>Mg(2+)</name>
        <dbReference type="ChEBI" id="CHEBI:18420"/>
        <label>1</label>
    </ligand>
</feature>
<feature type="binding site" evidence="1">
    <location>
        <position position="38"/>
    </location>
    <ligand>
        <name>Mg(2+)</name>
        <dbReference type="ChEBI" id="CHEBI:18420"/>
        <label>2</label>
    </ligand>
</feature>
<feature type="binding site" evidence="1">
    <location>
        <position position="42"/>
    </location>
    <ligand>
        <name>D-ribulose 5-phosphate</name>
        <dbReference type="ChEBI" id="CHEBI:58121"/>
    </ligand>
</feature>
<feature type="binding site" evidence="1">
    <location>
        <begin position="150"/>
        <end position="154"/>
    </location>
    <ligand>
        <name>D-ribulose 5-phosphate</name>
        <dbReference type="ChEBI" id="CHEBI:58121"/>
    </ligand>
</feature>
<feature type="binding site" evidence="1">
    <location>
        <position position="153"/>
    </location>
    <ligand>
        <name>Mg(2+)</name>
        <dbReference type="ChEBI" id="CHEBI:18420"/>
        <label>2</label>
    </ligand>
</feature>
<feature type="binding site" evidence="1">
    <location>
        <position position="174"/>
    </location>
    <ligand>
        <name>D-ribulose 5-phosphate</name>
        <dbReference type="ChEBI" id="CHEBI:58121"/>
    </ligand>
</feature>
<feature type="site" description="Essential for catalytic activity" evidence="1">
    <location>
        <position position="136"/>
    </location>
</feature>
<feature type="site" description="Essential for catalytic activity" evidence="1">
    <location>
        <position position="174"/>
    </location>
</feature>
<keyword id="KW-0456">Lyase</keyword>
<keyword id="KW-0460">Magnesium</keyword>
<keyword id="KW-0464">Manganese</keyword>
<keyword id="KW-0479">Metal-binding</keyword>
<keyword id="KW-1185">Reference proteome</keyword>
<keyword id="KW-0686">Riboflavin biosynthesis</keyword>
<accession>B4EW41</accession>
<comment type="function">
    <text evidence="1">Catalyzes the conversion of D-ribulose 5-phosphate to formate and 3,4-dihydroxy-2-butanone 4-phosphate.</text>
</comment>
<comment type="catalytic activity">
    <reaction evidence="1">
        <text>D-ribulose 5-phosphate = (2S)-2-hydroxy-3-oxobutyl phosphate + formate + H(+)</text>
        <dbReference type="Rhea" id="RHEA:18457"/>
        <dbReference type="ChEBI" id="CHEBI:15378"/>
        <dbReference type="ChEBI" id="CHEBI:15740"/>
        <dbReference type="ChEBI" id="CHEBI:58121"/>
        <dbReference type="ChEBI" id="CHEBI:58830"/>
        <dbReference type="EC" id="4.1.99.12"/>
    </reaction>
</comment>
<comment type="cofactor">
    <cofactor evidence="1">
        <name>Mg(2+)</name>
        <dbReference type="ChEBI" id="CHEBI:18420"/>
    </cofactor>
    <cofactor evidence="1">
        <name>Mn(2+)</name>
        <dbReference type="ChEBI" id="CHEBI:29035"/>
    </cofactor>
    <text evidence="1">Binds 2 divalent metal cations per subunit. Magnesium or manganese.</text>
</comment>
<comment type="pathway">
    <text evidence="1">Cofactor biosynthesis; riboflavin biosynthesis; 2-hydroxy-3-oxobutyl phosphate from D-ribulose 5-phosphate: step 1/1.</text>
</comment>
<comment type="subunit">
    <text evidence="1">Homodimer.</text>
</comment>
<comment type="similarity">
    <text evidence="1">Belongs to the DHBP synthase family.</text>
</comment>
<gene>
    <name evidence="1" type="primary">ribB</name>
    <name type="ordered locus">PMI2353</name>
</gene>
<organism>
    <name type="scientific">Proteus mirabilis (strain HI4320)</name>
    <dbReference type="NCBI Taxonomy" id="529507"/>
    <lineage>
        <taxon>Bacteria</taxon>
        <taxon>Pseudomonadati</taxon>
        <taxon>Pseudomonadota</taxon>
        <taxon>Gammaproteobacteria</taxon>
        <taxon>Enterobacterales</taxon>
        <taxon>Morganellaceae</taxon>
        <taxon>Proteus</taxon>
    </lineage>
</organism>
<dbReference type="EC" id="4.1.99.12" evidence="1"/>
<dbReference type="EMBL" id="AM942759">
    <property type="protein sequence ID" value="CAR44646.1"/>
    <property type="molecule type" value="Genomic_DNA"/>
</dbReference>
<dbReference type="RefSeq" id="WP_004245565.1">
    <property type="nucleotide sequence ID" value="NC_010554.1"/>
</dbReference>
<dbReference type="SMR" id="B4EW41"/>
<dbReference type="EnsemblBacteria" id="CAR44646">
    <property type="protein sequence ID" value="CAR44646"/>
    <property type="gene ID" value="PMI2353"/>
</dbReference>
<dbReference type="GeneID" id="6803523"/>
<dbReference type="KEGG" id="pmr:PMI2353"/>
<dbReference type="eggNOG" id="COG0108">
    <property type="taxonomic scope" value="Bacteria"/>
</dbReference>
<dbReference type="HOGENOM" id="CLU_020273_3_0_6"/>
<dbReference type="UniPathway" id="UPA00275">
    <property type="reaction ID" value="UER00399"/>
</dbReference>
<dbReference type="Proteomes" id="UP000008319">
    <property type="component" value="Chromosome"/>
</dbReference>
<dbReference type="GO" id="GO:0005829">
    <property type="term" value="C:cytosol"/>
    <property type="evidence" value="ECO:0007669"/>
    <property type="project" value="TreeGrafter"/>
</dbReference>
<dbReference type="GO" id="GO:0008686">
    <property type="term" value="F:3,4-dihydroxy-2-butanone-4-phosphate synthase activity"/>
    <property type="evidence" value="ECO:0007669"/>
    <property type="project" value="UniProtKB-UniRule"/>
</dbReference>
<dbReference type="GO" id="GO:0000287">
    <property type="term" value="F:magnesium ion binding"/>
    <property type="evidence" value="ECO:0007669"/>
    <property type="project" value="UniProtKB-UniRule"/>
</dbReference>
<dbReference type="GO" id="GO:0030145">
    <property type="term" value="F:manganese ion binding"/>
    <property type="evidence" value="ECO:0007669"/>
    <property type="project" value="UniProtKB-UniRule"/>
</dbReference>
<dbReference type="GO" id="GO:0009231">
    <property type="term" value="P:riboflavin biosynthetic process"/>
    <property type="evidence" value="ECO:0007669"/>
    <property type="project" value="UniProtKB-UniRule"/>
</dbReference>
<dbReference type="FunFam" id="3.90.870.10:FF:000002">
    <property type="entry name" value="3,4-dihydroxy-2-butanone 4-phosphate synthase"/>
    <property type="match status" value="1"/>
</dbReference>
<dbReference type="Gene3D" id="3.90.870.10">
    <property type="entry name" value="DHBP synthase"/>
    <property type="match status" value="1"/>
</dbReference>
<dbReference type="HAMAP" id="MF_00180">
    <property type="entry name" value="RibB"/>
    <property type="match status" value="1"/>
</dbReference>
<dbReference type="InterPro" id="IPR017945">
    <property type="entry name" value="DHBP_synth_RibB-like_a/b_dom"/>
</dbReference>
<dbReference type="InterPro" id="IPR000422">
    <property type="entry name" value="DHBP_synthase_RibB"/>
</dbReference>
<dbReference type="NCBIfam" id="TIGR00506">
    <property type="entry name" value="ribB"/>
    <property type="match status" value="1"/>
</dbReference>
<dbReference type="PANTHER" id="PTHR21327:SF38">
    <property type="entry name" value="3,4-DIHYDROXY-2-BUTANONE 4-PHOSPHATE SYNTHASE"/>
    <property type="match status" value="1"/>
</dbReference>
<dbReference type="PANTHER" id="PTHR21327">
    <property type="entry name" value="GTP CYCLOHYDROLASE II-RELATED"/>
    <property type="match status" value="1"/>
</dbReference>
<dbReference type="Pfam" id="PF00926">
    <property type="entry name" value="DHBP_synthase"/>
    <property type="match status" value="1"/>
</dbReference>
<dbReference type="SUPFAM" id="SSF55821">
    <property type="entry name" value="YrdC/RibB"/>
    <property type="match status" value="1"/>
</dbReference>
<name>RIBB_PROMH</name>
<sequence length="217" mass="23506">MNQTLLSEFGSPLERVERALEALRAGKGVMVLDDENRENEGDMVFVAETMTTEQMAMSIRHGSGIVCVCITEERRQQLDLPMMVENNTSHFHTAFTVTIEAAQGVTTGVSAADRLTTVRAAAADNAKPSDLNRPGHVFPLRAQPGGVLTRGGHTEASIDLATLAGFKPVAVLCELTNDDGTMARAPEVVTFAKQHDMPVLTIEDLVAYRLREEKKAG</sequence>
<evidence type="ECO:0000255" key="1">
    <source>
        <dbReference type="HAMAP-Rule" id="MF_00180"/>
    </source>
</evidence>